<sequence>MAEFPASLLILNGKSTDNLPLREAIMLLREEGMTIHVRVTWEKGDAVRFVEEARKLGVATVIAGGGDGTINEVSTALIQCEGDDIPALGILPLGTANDFATSVGIPEALDKALKLAIAGNAIAIDMAQVNKQTCFINMATGGFGTRITTETPEKLKAALGGVSYIIHGLMRMDTLQPDRCEIRGENFHWQGDALVIGIGNGRQAGGGQQLCPNALINDGLLQLRIFTGDEIIPTLVSTLKSDEDNPNIIEGASSWFDIQAPHEITFNLDGEPLSGQNFHIEILPAALRCRLPPDCPLLR</sequence>
<dbReference type="EC" id="2.7.1.-" evidence="1"/>
<dbReference type="EMBL" id="FM180568">
    <property type="protein sequence ID" value="CAS09774.1"/>
    <property type="molecule type" value="Genomic_DNA"/>
</dbReference>
<dbReference type="RefSeq" id="WP_000807378.1">
    <property type="nucleotide sequence ID" value="NC_011601.1"/>
</dbReference>
<dbReference type="SMR" id="B7UTC1"/>
<dbReference type="KEGG" id="ecg:E2348C_2226"/>
<dbReference type="HOGENOM" id="CLU_045532_1_1_6"/>
<dbReference type="Proteomes" id="UP000008205">
    <property type="component" value="Chromosome"/>
</dbReference>
<dbReference type="GO" id="GO:0005737">
    <property type="term" value="C:cytoplasm"/>
    <property type="evidence" value="ECO:0007669"/>
    <property type="project" value="UniProtKB-SubCell"/>
</dbReference>
<dbReference type="GO" id="GO:0005886">
    <property type="term" value="C:plasma membrane"/>
    <property type="evidence" value="ECO:0007669"/>
    <property type="project" value="TreeGrafter"/>
</dbReference>
<dbReference type="GO" id="GO:0005524">
    <property type="term" value="F:ATP binding"/>
    <property type="evidence" value="ECO:0007669"/>
    <property type="project" value="UniProtKB-UniRule"/>
</dbReference>
<dbReference type="GO" id="GO:0001727">
    <property type="term" value="F:lipid kinase activity"/>
    <property type="evidence" value="ECO:0007669"/>
    <property type="project" value="UniProtKB-UniRule"/>
</dbReference>
<dbReference type="GO" id="GO:0000287">
    <property type="term" value="F:magnesium ion binding"/>
    <property type="evidence" value="ECO:0007669"/>
    <property type="project" value="UniProtKB-UniRule"/>
</dbReference>
<dbReference type="GO" id="GO:0008654">
    <property type="term" value="P:phospholipid biosynthetic process"/>
    <property type="evidence" value="ECO:0007669"/>
    <property type="project" value="UniProtKB-UniRule"/>
</dbReference>
<dbReference type="FunFam" id="2.60.200.40:FF:000008">
    <property type="entry name" value="Probable lipid kinase YegS"/>
    <property type="match status" value="1"/>
</dbReference>
<dbReference type="FunFam" id="3.40.50.10330:FF:000008">
    <property type="entry name" value="Probable lipid kinase YegS"/>
    <property type="match status" value="1"/>
</dbReference>
<dbReference type="Gene3D" id="2.60.200.40">
    <property type="match status" value="1"/>
</dbReference>
<dbReference type="Gene3D" id="3.40.50.10330">
    <property type="entry name" value="Probable inorganic polyphosphate/atp-NAD kinase, domain 1"/>
    <property type="match status" value="1"/>
</dbReference>
<dbReference type="HAMAP" id="MF_01377">
    <property type="entry name" value="YegS"/>
    <property type="match status" value="1"/>
</dbReference>
<dbReference type="InterPro" id="IPR017438">
    <property type="entry name" value="ATP-NAD_kinase_N"/>
</dbReference>
<dbReference type="InterPro" id="IPR005218">
    <property type="entry name" value="Diacylglycerol/lipid_kinase"/>
</dbReference>
<dbReference type="InterPro" id="IPR001206">
    <property type="entry name" value="Diacylglycerol_kinase_cat_dom"/>
</dbReference>
<dbReference type="InterPro" id="IPR022433">
    <property type="entry name" value="Lip_kinase_YegS"/>
</dbReference>
<dbReference type="InterPro" id="IPR050187">
    <property type="entry name" value="Lipid_Phosphate_FormReg"/>
</dbReference>
<dbReference type="InterPro" id="IPR016064">
    <property type="entry name" value="NAD/diacylglycerol_kinase_sf"/>
</dbReference>
<dbReference type="InterPro" id="IPR045540">
    <property type="entry name" value="YegS/DAGK_C"/>
</dbReference>
<dbReference type="NCBIfam" id="TIGR03702">
    <property type="entry name" value="lip_kinase_YegS"/>
    <property type="match status" value="1"/>
</dbReference>
<dbReference type="NCBIfam" id="NF009602">
    <property type="entry name" value="PRK13054.1"/>
    <property type="match status" value="1"/>
</dbReference>
<dbReference type="NCBIfam" id="TIGR00147">
    <property type="entry name" value="YegS/Rv2252/BmrU family lipid kinase"/>
    <property type="match status" value="1"/>
</dbReference>
<dbReference type="PANTHER" id="PTHR12358:SF106">
    <property type="entry name" value="LIPID KINASE YEGS"/>
    <property type="match status" value="1"/>
</dbReference>
<dbReference type="PANTHER" id="PTHR12358">
    <property type="entry name" value="SPHINGOSINE KINASE"/>
    <property type="match status" value="1"/>
</dbReference>
<dbReference type="Pfam" id="PF00781">
    <property type="entry name" value="DAGK_cat"/>
    <property type="match status" value="1"/>
</dbReference>
<dbReference type="Pfam" id="PF19279">
    <property type="entry name" value="YegS_C"/>
    <property type="match status" value="1"/>
</dbReference>
<dbReference type="SMART" id="SM00046">
    <property type="entry name" value="DAGKc"/>
    <property type="match status" value="1"/>
</dbReference>
<dbReference type="SUPFAM" id="SSF111331">
    <property type="entry name" value="NAD kinase/diacylglycerol kinase-like"/>
    <property type="match status" value="1"/>
</dbReference>
<dbReference type="PROSITE" id="PS50146">
    <property type="entry name" value="DAGK"/>
    <property type="match status" value="1"/>
</dbReference>
<evidence type="ECO:0000255" key="1">
    <source>
        <dbReference type="HAMAP-Rule" id="MF_01377"/>
    </source>
</evidence>
<name>YEGS_ECO27</name>
<keyword id="KW-0067">ATP-binding</keyword>
<keyword id="KW-0963">Cytoplasm</keyword>
<keyword id="KW-0418">Kinase</keyword>
<keyword id="KW-0444">Lipid biosynthesis</keyword>
<keyword id="KW-0443">Lipid metabolism</keyword>
<keyword id="KW-0460">Magnesium</keyword>
<keyword id="KW-0479">Metal-binding</keyword>
<keyword id="KW-0547">Nucleotide-binding</keyword>
<keyword id="KW-0594">Phospholipid biosynthesis</keyword>
<keyword id="KW-1208">Phospholipid metabolism</keyword>
<keyword id="KW-1185">Reference proteome</keyword>
<keyword id="KW-0808">Transferase</keyword>
<organism>
    <name type="scientific">Escherichia coli O127:H6 (strain E2348/69 / EPEC)</name>
    <dbReference type="NCBI Taxonomy" id="574521"/>
    <lineage>
        <taxon>Bacteria</taxon>
        <taxon>Pseudomonadati</taxon>
        <taxon>Pseudomonadota</taxon>
        <taxon>Gammaproteobacteria</taxon>
        <taxon>Enterobacterales</taxon>
        <taxon>Enterobacteriaceae</taxon>
        <taxon>Escherichia</taxon>
    </lineage>
</organism>
<protein>
    <recommendedName>
        <fullName evidence="1">Probable lipid kinase YegS</fullName>
        <ecNumber evidence="1">2.7.1.-</ecNumber>
    </recommendedName>
</protein>
<reference key="1">
    <citation type="journal article" date="2009" name="J. Bacteriol.">
        <title>Complete genome sequence and comparative genome analysis of enteropathogenic Escherichia coli O127:H6 strain E2348/69.</title>
        <authorList>
            <person name="Iguchi A."/>
            <person name="Thomson N.R."/>
            <person name="Ogura Y."/>
            <person name="Saunders D."/>
            <person name="Ooka T."/>
            <person name="Henderson I.R."/>
            <person name="Harris D."/>
            <person name="Asadulghani M."/>
            <person name="Kurokawa K."/>
            <person name="Dean P."/>
            <person name="Kenny B."/>
            <person name="Quail M.A."/>
            <person name="Thurston S."/>
            <person name="Dougan G."/>
            <person name="Hayashi T."/>
            <person name="Parkhill J."/>
            <person name="Frankel G."/>
        </authorList>
    </citation>
    <scope>NUCLEOTIDE SEQUENCE [LARGE SCALE GENOMIC DNA]</scope>
    <source>
        <strain>E2348/69 / EPEC</strain>
    </source>
</reference>
<accession>B7UTC1</accession>
<feature type="chain" id="PRO_1000184196" description="Probable lipid kinase YegS">
    <location>
        <begin position="1"/>
        <end position="299"/>
    </location>
</feature>
<feature type="domain" description="DAGKc" evidence="1">
    <location>
        <begin position="2"/>
        <end position="133"/>
    </location>
</feature>
<feature type="active site" description="Proton acceptor" evidence="1">
    <location>
        <position position="271"/>
    </location>
</feature>
<feature type="binding site" evidence="1">
    <location>
        <position position="40"/>
    </location>
    <ligand>
        <name>ATP</name>
        <dbReference type="ChEBI" id="CHEBI:30616"/>
    </ligand>
</feature>
<feature type="binding site" evidence="1">
    <location>
        <begin position="66"/>
        <end position="72"/>
    </location>
    <ligand>
        <name>ATP</name>
        <dbReference type="ChEBI" id="CHEBI:30616"/>
    </ligand>
</feature>
<feature type="binding site" evidence="1">
    <location>
        <position position="95"/>
    </location>
    <ligand>
        <name>ATP</name>
        <dbReference type="ChEBI" id="CHEBI:30616"/>
    </ligand>
</feature>
<feature type="binding site" evidence="1">
    <location>
        <position position="215"/>
    </location>
    <ligand>
        <name>Mg(2+)</name>
        <dbReference type="ChEBI" id="CHEBI:18420"/>
    </ligand>
</feature>
<feature type="binding site" evidence="1">
    <location>
        <position position="218"/>
    </location>
    <ligand>
        <name>Mg(2+)</name>
        <dbReference type="ChEBI" id="CHEBI:18420"/>
    </ligand>
</feature>
<feature type="binding site" evidence="1">
    <location>
        <position position="220"/>
    </location>
    <ligand>
        <name>Mg(2+)</name>
        <dbReference type="ChEBI" id="CHEBI:18420"/>
    </ligand>
</feature>
<gene>
    <name evidence="1" type="primary">yegS</name>
    <name type="ordered locus">E2348C_2226</name>
</gene>
<comment type="function">
    <text evidence="1">Probably phosphorylates lipids; the in vivo substrate is unknown.</text>
</comment>
<comment type="cofactor">
    <cofactor evidence="1">
        <name>Mg(2+)</name>
        <dbReference type="ChEBI" id="CHEBI:18420"/>
    </cofactor>
    <cofactor evidence="1">
        <name>Ca(2+)</name>
        <dbReference type="ChEBI" id="CHEBI:29108"/>
    </cofactor>
    <text evidence="1">Binds 1 Mg(2+) ion per subunit. Ca(2+) may be able to substitute.</text>
</comment>
<comment type="subcellular location">
    <subcellularLocation>
        <location evidence="1">Cytoplasm</location>
    </subcellularLocation>
</comment>
<comment type="similarity">
    <text evidence="1">Belongs to the diacylglycerol/lipid kinase family. YegS lipid kinase subfamily.</text>
</comment>
<proteinExistence type="inferred from homology"/>